<sequence>MFGKGGLGNLMKQAQQMQEKMQQMQEEIAKLEVTGESGAGLVKVTINGAHNCRRVEIDPSLLEDDKEMLEDLVAAAFNDAARRIEETQKEKMASVSSGMQLPPGFKMPF</sequence>
<reference key="1">
    <citation type="submission" date="2007-08" db="EMBL/GenBank/DDBJ databases">
        <authorList>
            <consortium name="The Citrobacter koseri Genome Sequencing Project"/>
            <person name="McClelland M."/>
            <person name="Sanderson E.K."/>
            <person name="Porwollik S."/>
            <person name="Spieth J."/>
            <person name="Clifton W.S."/>
            <person name="Latreille P."/>
            <person name="Courtney L."/>
            <person name="Wang C."/>
            <person name="Pepin K."/>
            <person name="Bhonagiri V."/>
            <person name="Nash W."/>
            <person name="Johnson M."/>
            <person name="Thiruvilangam P."/>
            <person name="Wilson R."/>
        </authorList>
    </citation>
    <scope>NUCLEOTIDE SEQUENCE [LARGE SCALE GENOMIC DNA]</scope>
    <source>
        <strain>ATCC BAA-895 / CDC 4225-83 / SGSC4696</strain>
    </source>
</reference>
<keyword id="KW-0963">Cytoplasm</keyword>
<keyword id="KW-0238">DNA-binding</keyword>
<keyword id="KW-1185">Reference proteome</keyword>
<gene>
    <name type="ordered locus">CKO_02678</name>
</gene>
<evidence type="ECO:0000255" key="1">
    <source>
        <dbReference type="HAMAP-Rule" id="MF_00274"/>
    </source>
</evidence>
<evidence type="ECO:0000256" key="2">
    <source>
        <dbReference type="SAM" id="MobiDB-lite"/>
    </source>
</evidence>
<comment type="function">
    <text evidence="1">Binds to DNA and alters its conformation. May be involved in regulation of gene expression, nucleoid organization and DNA protection.</text>
</comment>
<comment type="subunit">
    <text evidence="1">Homodimer.</text>
</comment>
<comment type="subcellular location">
    <subcellularLocation>
        <location evidence="1">Cytoplasm</location>
        <location evidence="1">Nucleoid</location>
    </subcellularLocation>
</comment>
<comment type="similarity">
    <text evidence="1">Belongs to the YbaB/EbfC family.</text>
</comment>
<organism>
    <name type="scientific">Citrobacter koseri (strain ATCC BAA-895 / CDC 4225-83 / SGSC4696)</name>
    <dbReference type="NCBI Taxonomy" id="290338"/>
    <lineage>
        <taxon>Bacteria</taxon>
        <taxon>Pseudomonadati</taxon>
        <taxon>Pseudomonadota</taxon>
        <taxon>Gammaproteobacteria</taxon>
        <taxon>Enterobacterales</taxon>
        <taxon>Enterobacteriaceae</taxon>
        <taxon>Citrobacter</taxon>
    </lineage>
</organism>
<accession>A8AJX2</accession>
<protein>
    <recommendedName>
        <fullName evidence="1">Nucleoid-associated protein CKO_02678</fullName>
    </recommendedName>
</protein>
<proteinExistence type="inferred from homology"/>
<dbReference type="EMBL" id="CP000822">
    <property type="protein sequence ID" value="ABV13785.1"/>
    <property type="molecule type" value="Genomic_DNA"/>
</dbReference>
<dbReference type="RefSeq" id="WP_001515903.1">
    <property type="nucleotide sequence ID" value="NC_009792.1"/>
</dbReference>
<dbReference type="SMR" id="A8AJX2"/>
<dbReference type="STRING" id="290338.CKO_02678"/>
<dbReference type="KEGG" id="cko:CKO_02678"/>
<dbReference type="HOGENOM" id="CLU_140930_0_0_6"/>
<dbReference type="OrthoDB" id="9808738at2"/>
<dbReference type="Proteomes" id="UP000008148">
    <property type="component" value="Chromosome"/>
</dbReference>
<dbReference type="GO" id="GO:0043590">
    <property type="term" value="C:bacterial nucleoid"/>
    <property type="evidence" value="ECO:0007669"/>
    <property type="project" value="UniProtKB-UniRule"/>
</dbReference>
<dbReference type="GO" id="GO:0005829">
    <property type="term" value="C:cytosol"/>
    <property type="evidence" value="ECO:0007669"/>
    <property type="project" value="TreeGrafter"/>
</dbReference>
<dbReference type="GO" id="GO:0003677">
    <property type="term" value="F:DNA binding"/>
    <property type="evidence" value="ECO:0007669"/>
    <property type="project" value="UniProtKB-UniRule"/>
</dbReference>
<dbReference type="FunFam" id="3.30.1310.10:FF:000001">
    <property type="entry name" value="Nucleoid-associated protein YbaB"/>
    <property type="match status" value="1"/>
</dbReference>
<dbReference type="Gene3D" id="3.30.1310.10">
    <property type="entry name" value="Nucleoid-associated protein YbaB-like domain"/>
    <property type="match status" value="1"/>
</dbReference>
<dbReference type="HAMAP" id="MF_00274">
    <property type="entry name" value="DNA_YbaB_EbfC"/>
    <property type="match status" value="1"/>
</dbReference>
<dbReference type="InterPro" id="IPR036894">
    <property type="entry name" value="YbaB-like_sf"/>
</dbReference>
<dbReference type="InterPro" id="IPR004401">
    <property type="entry name" value="YbaB/EbfC"/>
</dbReference>
<dbReference type="NCBIfam" id="TIGR00103">
    <property type="entry name" value="DNA_YbaB_EbfC"/>
    <property type="match status" value="1"/>
</dbReference>
<dbReference type="PANTHER" id="PTHR33449">
    <property type="entry name" value="NUCLEOID-ASSOCIATED PROTEIN YBAB"/>
    <property type="match status" value="1"/>
</dbReference>
<dbReference type="PANTHER" id="PTHR33449:SF1">
    <property type="entry name" value="NUCLEOID-ASSOCIATED PROTEIN YBAB"/>
    <property type="match status" value="1"/>
</dbReference>
<dbReference type="Pfam" id="PF02575">
    <property type="entry name" value="YbaB_DNA_bd"/>
    <property type="match status" value="1"/>
</dbReference>
<dbReference type="PIRSF" id="PIRSF004555">
    <property type="entry name" value="UCP004555"/>
    <property type="match status" value="1"/>
</dbReference>
<dbReference type="SUPFAM" id="SSF82607">
    <property type="entry name" value="YbaB-like"/>
    <property type="match status" value="1"/>
</dbReference>
<name>Y2678_CITK8</name>
<feature type="chain" id="PRO_1000003725" description="Nucleoid-associated protein CKO_02678">
    <location>
        <begin position="1"/>
        <end position="109"/>
    </location>
</feature>
<feature type="region of interest" description="Disordered" evidence="2">
    <location>
        <begin position="89"/>
        <end position="109"/>
    </location>
</feature>